<proteinExistence type="inferred from homology"/>
<sequence>MKVLWVALVVALLAGCQADMEGELGSEEPLPPEQPRGQDSQPWEQVLGRLWDYLRWVQTLSDQVQEELLNTQVIQELTVLMEETMKEVKAYREELEGQLAPMAQETQARVSKELQAAQARLGSDMEDLRNRLAQYRSEVQAMLGQSTEELRARMASHLRKLRKRLLRDADDLKKRLAVYQAGASEGAERSVSAIRERLRPLVEQSQSRAATLSTQVGQPLLDRAEAWRQKLHGRLEEVGVRAQDRLDKMRQQLEEVRAKVEEQGSQIRLQAEAFQARLRSWFEPLVEDMQRQWAGLVEKVQLALHLSPTSPPSENH</sequence>
<dbReference type="EMBL" id="CBYI010021703">
    <property type="status" value="NOT_ANNOTATED_CDS"/>
    <property type="molecule type" value="Genomic_DNA"/>
</dbReference>
<dbReference type="RefSeq" id="XP_011983586.1">
    <property type="nucleotide sequence ID" value="XM_012128196.1"/>
</dbReference>
<dbReference type="RefSeq" id="XP_011983587.1">
    <property type="nucleotide sequence ID" value="XM_012128197.1"/>
</dbReference>
<dbReference type="RefSeq" id="XP_011983588.1">
    <property type="nucleotide sequence ID" value="XM_012128198.2"/>
</dbReference>
<dbReference type="SMR" id="P0DN39"/>
<dbReference type="GlyCosmos" id="P0DN39">
    <property type="glycosylation" value="1 site, No reported glycans"/>
</dbReference>
<dbReference type="GO" id="GO:0042627">
    <property type="term" value="C:chylomicron"/>
    <property type="evidence" value="ECO:0007669"/>
    <property type="project" value="UniProtKB-KW"/>
</dbReference>
<dbReference type="GO" id="GO:0070062">
    <property type="term" value="C:extracellular exosome"/>
    <property type="evidence" value="ECO:0000250"/>
    <property type="project" value="UniProtKB"/>
</dbReference>
<dbReference type="GO" id="GO:0031012">
    <property type="term" value="C:extracellular matrix"/>
    <property type="evidence" value="ECO:0000250"/>
    <property type="project" value="UniProtKB"/>
</dbReference>
<dbReference type="GO" id="GO:0005615">
    <property type="term" value="C:extracellular space"/>
    <property type="evidence" value="ECO:0000250"/>
    <property type="project" value="UniProtKB"/>
</dbReference>
<dbReference type="GO" id="GO:0034364">
    <property type="term" value="C:high-density lipoprotein particle"/>
    <property type="evidence" value="ECO:0000250"/>
    <property type="project" value="UniProtKB"/>
</dbReference>
<dbReference type="GO" id="GO:0034363">
    <property type="term" value="C:intermediate-density lipoprotein particle"/>
    <property type="evidence" value="ECO:0000250"/>
    <property type="project" value="UniProtKB"/>
</dbReference>
<dbReference type="GO" id="GO:0034362">
    <property type="term" value="C:low-density lipoprotein particle"/>
    <property type="evidence" value="ECO:0000250"/>
    <property type="project" value="UniProtKB"/>
</dbReference>
<dbReference type="GO" id="GO:0097487">
    <property type="term" value="C:multivesicular body, internal vesicle"/>
    <property type="evidence" value="ECO:0000250"/>
    <property type="project" value="UniProtKB"/>
</dbReference>
<dbReference type="GO" id="GO:0034361">
    <property type="term" value="C:very-low-density lipoprotein particle"/>
    <property type="evidence" value="ECO:0000250"/>
    <property type="project" value="UniProtKB"/>
</dbReference>
<dbReference type="GO" id="GO:0120020">
    <property type="term" value="F:cholesterol transfer activity"/>
    <property type="evidence" value="ECO:0007669"/>
    <property type="project" value="TreeGrafter"/>
</dbReference>
<dbReference type="GO" id="GO:0043395">
    <property type="term" value="F:heparan sulfate proteoglycan binding"/>
    <property type="evidence" value="ECO:0000250"/>
    <property type="project" value="UniProtKB"/>
</dbReference>
<dbReference type="GO" id="GO:0008201">
    <property type="term" value="F:heparin binding"/>
    <property type="evidence" value="ECO:0000250"/>
    <property type="project" value="UniProtKB"/>
</dbReference>
<dbReference type="GO" id="GO:0042802">
    <property type="term" value="F:identical protein binding"/>
    <property type="evidence" value="ECO:0000250"/>
    <property type="project" value="UniProtKB"/>
</dbReference>
<dbReference type="GO" id="GO:0050750">
    <property type="term" value="F:low-density lipoprotein particle receptor binding"/>
    <property type="evidence" value="ECO:0000250"/>
    <property type="project" value="UniProtKB"/>
</dbReference>
<dbReference type="GO" id="GO:0060228">
    <property type="term" value="F:phosphatidylcholine-sterol O-acyltransferase activator activity"/>
    <property type="evidence" value="ECO:0007669"/>
    <property type="project" value="TreeGrafter"/>
</dbReference>
<dbReference type="GO" id="GO:0005543">
    <property type="term" value="F:phospholipid binding"/>
    <property type="evidence" value="ECO:0007669"/>
    <property type="project" value="TreeGrafter"/>
</dbReference>
<dbReference type="GO" id="GO:0055090">
    <property type="term" value="P:acylglycerol homeostasis"/>
    <property type="evidence" value="ECO:0007669"/>
    <property type="project" value="TreeGrafter"/>
</dbReference>
<dbReference type="GO" id="GO:0033344">
    <property type="term" value="P:cholesterol efflux"/>
    <property type="evidence" value="ECO:0000250"/>
    <property type="project" value="UniProtKB"/>
</dbReference>
<dbReference type="GO" id="GO:0008203">
    <property type="term" value="P:cholesterol metabolic process"/>
    <property type="evidence" value="ECO:0007669"/>
    <property type="project" value="TreeGrafter"/>
</dbReference>
<dbReference type="GO" id="GO:0034382">
    <property type="term" value="P:chylomicron remnant clearance"/>
    <property type="evidence" value="ECO:0000250"/>
    <property type="project" value="UniProtKB"/>
</dbReference>
<dbReference type="GO" id="GO:0034380">
    <property type="term" value="P:high-density lipoprotein particle assembly"/>
    <property type="evidence" value="ECO:0000250"/>
    <property type="project" value="UniProtKB"/>
</dbReference>
<dbReference type="GO" id="GO:0071831">
    <property type="term" value="P:intermediate-density lipoprotein particle clearance"/>
    <property type="evidence" value="ECO:0000250"/>
    <property type="project" value="UniProtKB"/>
</dbReference>
<dbReference type="GO" id="GO:0042158">
    <property type="term" value="P:lipoprotein biosynthetic process"/>
    <property type="evidence" value="ECO:0000250"/>
    <property type="project" value="UniProtKB"/>
</dbReference>
<dbReference type="GO" id="GO:0032438">
    <property type="term" value="P:melanosome organization"/>
    <property type="evidence" value="ECO:0000250"/>
    <property type="project" value="UniProtKB"/>
</dbReference>
<dbReference type="GO" id="GO:1905907">
    <property type="term" value="P:negative regulation of amyloid fibril formation"/>
    <property type="evidence" value="ECO:0000250"/>
    <property type="project" value="UniProtKB"/>
</dbReference>
<dbReference type="GO" id="GO:0033700">
    <property type="term" value="P:phospholipid efflux"/>
    <property type="evidence" value="ECO:0007669"/>
    <property type="project" value="TreeGrafter"/>
</dbReference>
<dbReference type="GO" id="GO:1900223">
    <property type="term" value="P:positive regulation of amyloid-beta clearance"/>
    <property type="evidence" value="ECO:0000250"/>
    <property type="project" value="UniProtKB"/>
</dbReference>
<dbReference type="GO" id="GO:0071830">
    <property type="term" value="P:triglyceride-rich lipoprotein particle clearance"/>
    <property type="evidence" value="ECO:0000250"/>
    <property type="project" value="UniProtKB"/>
</dbReference>
<dbReference type="GO" id="GO:0034447">
    <property type="term" value="P:very-low-density lipoprotein particle clearance"/>
    <property type="evidence" value="ECO:0000250"/>
    <property type="project" value="UniProtKB"/>
</dbReference>
<dbReference type="FunFam" id="1.20.120.20:FF:000002">
    <property type="entry name" value="Apolipoprotein E"/>
    <property type="match status" value="1"/>
</dbReference>
<dbReference type="FunFam" id="1.20.120.20:FF:000003">
    <property type="entry name" value="Apolipoprotein E"/>
    <property type="match status" value="1"/>
</dbReference>
<dbReference type="Gene3D" id="1.20.120.20">
    <property type="entry name" value="Apolipoprotein"/>
    <property type="match status" value="2"/>
</dbReference>
<dbReference type="InterPro" id="IPR000074">
    <property type="entry name" value="ApoA_E"/>
</dbReference>
<dbReference type="InterPro" id="IPR050163">
    <property type="entry name" value="Apolipoprotein_A1/A4/E"/>
</dbReference>
<dbReference type="PANTHER" id="PTHR18976">
    <property type="entry name" value="APOLIPOPROTEIN"/>
    <property type="match status" value="1"/>
</dbReference>
<dbReference type="PANTHER" id="PTHR18976:SF2">
    <property type="entry name" value="APOLIPOPROTEIN E"/>
    <property type="match status" value="1"/>
</dbReference>
<dbReference type="Pfam" id="PF01442">
    <property type="entry name" value="Apolipoprotein"/>
    <property type="match status" value="1"/>
</dbReference>
<dbReference type="SUPFAM" id="SSF58113">
    <property type="entry name" value="Apolipoprotein A-I"/>
    <property type="match status" value="1"/>
</dbReference>
<accession>P0DN39</accession>
<organism>
    <name type="scientific">Ovis aries musimon</name>
    <name type="common">Mouflon</name>
    <dbReference type="NCBI Taxonomy" id="9938"/>
    <lineage>
        <taxon>Eukaryota</taxon>
        <taxon>Metazoa</taxon>
        <taxon>Chordata</taxon>
        <taxon>Craniata</taxon>
        <taxon>Vertebrata</taxon>
        <taxon>Euteleostomi</taxon>
        <taxon>Mammalia</taxon>
        <taxon>Eutheria</taxon>
        <taxon>Laurasiatheria</taxon>
        <taxon>Artiodactyla</taxon>
        <taxon>Ruminantia</taxon>
        <taxon>Pecora</taxon>
        <taxon>Bovidae</taxon>
        <taxon>Caprinae</taxon>
        <taxon>Ovis</taxon>
    </lineage>
</organism>
<protein>
    <recommendedName>
        <fullName>Apolipoprotein E</fullName>
        <shortName>Apo-E</shortName>
    </recommendedName>
</protein>
<feature type="signal peptide" evidence="3">
    <location>
        <begin position="1"/>
        <end position="18"/>
    </location>
</feature>
<feature type="chain" id="PRO_0000435011" description="Apolipoprotein E">
    <location>
        <begin position="19"/>
        <end position="316"/>
    </location>
</feature>
<feature type="repeat" description="1">
    <location>
        <begin position="79"/>
        <end position="100"/>
    </location>
</feature>
<feature type="repeat" description="2">
    <location>
        <begin position="101"/>
        <end position="122"/>
    </location>
</feature>
<feature type="repeat" description="3">
    <location>
        <begin position="123"/>
        <end position="144"/>
    </location>
</feature>
<feature type="repeat" description="4">
    <location>
        <begin position="145"/>
        <end position="166"/>
    </location>
</feature>
<feature type="repeat" description="5">
    <location>
        <begin position="167"/>
        <end position="188"/>
    </location>
</feature>
<feature type="repeat" description="6">
    <location>
        <begin position="189"/>
        <end position="210"/>
    </location>
</feature>
<feature type="repeat" description="7">
    <location>
        <begin position="211"/>
        <end position="232"/>
    </location>
</feature>
<feature type="repeat" description="8">
    <location>
        <begin position="233"/>
        <end position="254"/>
    </location>
</feature>
<feature type="region of interest" description="8 X 22 AA approximate tandem repeats">
    <location>
        <begin position="79"/>
        <end position="254"/>
    </location>
</feature>
<feature type="region of interest" description="LDL and other lipoprotein receptors binding" evidence="1">
    <location>
        <begin position="157"/>
        <end position="167"/>
    </location>
</feature>
<feature type="region of interest" description="Lipid-binding and lipoprotein association" evidence="1">
    <location>
        <begin position="209"/>
        <end position="289"/>
    </location>
</feature>
<feature type="region of interest" description="Homooligomerization" evidence="1">
    <location>
        <begin position="265"/>
        <end position="316"/>
    </location>
</feature>
<feature type="region of interest" description="Specificity for association with VLDL" evidence="1">
    <location>
        <begin position="277"/>
        <end position="289"/>
    </location>
</feature>
<feature type="binding site" evidence="1">
    <location>
        <begin position="161"/>
        <end position="164"/>
    </location>
    <ligand>
        <name>heparin</name>
        <dbReference type="ChEBI" id="CHEBI:28304"/>
    </ligand>
</feature>
<feature type="binding site" evidence="1">
    <location>
        <begin position="228"/>
        <end position="235"/>
    </location>
    <ligand>
        <name>heparin</name>
        <dbReference type="ChEBI" id="CHEBI:28304"/>
    </ligand>
</feature>
<feature type="modified residue" description="Methionine sulfoxide" evidence="2">
    <location>
        <position position="142"/>
    </location>
</feature>
<feature type="modified residue" description="Phosphoserine" evidence="1">
    <location>
        <position position="146"/>
    </location>
</feature>
<feature type="glycosylation site" description="O-linked (GalNAc...) threonine" evidence="1">
    <location>
        <position position="211"/>
    </location>
</feature>
<name>APOE_OVIMU</name>
<evidence type="ECO:0000250" key="1">
    <source>
        <dbReference type="UniProtKB" id="P02649"/>
    </source>
</evidence>
<evidence type="ECO:0000250" key="2">
    <source>
        <dbReference type="UniProtKB" id="P08226"/>
    </source>
</evidence>
<evidence type="ECO:0000255" key="3"/>
<evidence type="ECO:0000305" key="4"/>
<reference key="1">
    <citation type="submission" date="2014-02" db="EMBL/GenBank/DDBJ databases">
        <authorList>
            <person name="Streeter I."/>
        </authorList>
    </citation>
    <scope>NUCLEOTIDE SEQUENCE [LARGE SCALE GENOMIC DNA]</scope>
</reference>
<reference key="2">
    <citation type="unpublished observations" date="2015-10">
        <authorList>
            <person name="Puppione D.L."/>
        </authorList>
    </citation>
    <scope>IDENTIFICATION</scope>
</reference>
<keyword id="KW-0162">Chylomicron</keyword>
<keyword id="KW-0967">Endosome</keyword>
<keyword id="KW-0272">Extracellular matrix</keyword>
<keyword id="KW-0325">Glycoprotein</keyword>
<keyword id="KW-0345">HDL</keyword>
<keyword id="KW-0358">Heparin-binding</keyword>
<keyword id="KW-0445">Lipid transport</keyword>
<keyword id="KW-0446">Lipid-binding</keyword>
<keyword id="KW-0558">Oxidation</keyword>
<keyword id="KW-0597">Phosphoprotein</keyword>
<keyword id="KW-0677">Repeat</keyword>
<keyword id="KW-0964">Secreted</keyword>
<keyword id="KW-0732">Signal</keyword>
<keyword id="KW-0813">Transport</keyword>
<keyword id="KW-0850">VLDL</keyword>
<comment type="function">
    <text evidence="1">APOE is an apolipoprotein, a protein associating with lipid particles, that mainly functions in lipoprotein-mediated lipid transport between organs via the plasma and interstitial fluids. APOE is a core component of plasma lipoproteins and is involved in their production, conversion and clearance. Apolipoproteins are amphipathic molecules that interact both with lipids of the lipoprotein particle core and the aqueous environment of the plasma. As such, APOE associates with chylomicrons, chylomicron remnants, very low density lipoproteins (VLDL) and intermediate density lipoproteins (IDL) but shows a preferential binding to high-density lipoproteins (HDL). It also binds a wide range of cellular receptors including the LDL receptor/LDLR and the very low-density lipoprotein receptor/VLDLR that mediate the cellular uptake of the APOE-containing lipoprotein particles. Finally, APOE also has a heparin-binding activity and binds heparan-sulfate proteoglycans on the surface of cells, a property that supports the capture and the receptor-mediated uptake of APOE-containing lipoproteins by cells.</text>
</comment>
<comment type="subunit">
    <text evidence="1">Homotetramer. May interact with ABCA1; functionally associated with ABCA1 in the biogenesis of HDLs. May interact with APP/A4 amyloid-beta peptide; the interaction is extremely stable in vitro but its physiological significance is unclear. May interact with MAPT. May interact with MAP2. In the cerebrospinal fluid, interacts with secreted SORL1. Interacts with PMEL; this allows the loading of PMEL luminal fragment on ILVs to induce fibril nucleation.</text>
</comment>
<comment type="subcellular location">
    <subcellularLocation>
        <location evidence="1">Secreted</location>
    </subcellularLocation>
    <subcellularLocation>
        <location evidence="1">Secreted</location>
        <location evidence="1">Extracellular space</location>
    </subcellularLocation>
    <subcellularLocation>
        <location evidence="1">Secreted</location>
        <location evidence="1">Extracellular space</location>
        <location evidence="1">Extracellular matrix</location>
    </subcellularLocation>
    <subcellularLocation>
        <location evidence="1">Extracellular vesicle</location>
    </subcellularLocation>
    <subcellularLocation>
        <location evidence="1">Endosome</location>
        <location evidence="1">Multivesicular body</location>
    </subcellularLocation>
    <text evidence="1">In the plasma, APOE is associated with chylomicrons, chylomicrons remnants, VLDL, LDL and HDL lipoproteins. Lipid poor oligomeric APOE is associated with the extracellular matrix in a calcium- and heparan-sulfate proteoglycans-dependent manner. Lipidation induces the release from the extracellular matrix. Colocalizes with CD63 and PMEL at exosomes and in intraluminal vesicles within multivesicular endosomes.</text>
</comment>
<comment type="PTM">
    <text evidence="1">APOE exists as multiple glycosylated and sialylated glycoforms within cells and in plasma. The extent of glycosylation and sialylation are tissue and context specific.</text>
</comment>
<comment type="PTM">
    <text evidence="1">Glycated in plasma VLDL.</text>
</comment>
<comment type="PTM">
    <text evidence="1">Phosphorylated by FAM20C in the extracellular medium.</text>
</comment>
<comment type="similarity">
    <text evidence="4">Belongs to the apolipoprotein A1/A4/E family.</text>
</comment>
<gene>
    <name type="primary">APOE</name>
</gene>